<dbReference type="EC" id="3.4.22.-"/>
<dbReference type="EMBL" id="Y13090">
    <property type="protein sequence ID" value="CAA73532.1"/>
    <property type="molecule type" value="mRNA"/>
</dbReference>
<dbReference type="EMBL" id="AK077256">
    <property type="protein sequence ID" value="BAC36712.1"/>
    <property type="molecule type" value="mRNA"/>
</dbReference>
<dbReference type="EMBL" id="AK161525">
    <property type="protein sequence ID" value="BAE36443.1"/>
    <property type="molecule type" value="mRNA"/>
</dbReference>
<dbReference type="EMBL" id="BC028979">
    <property type="protein sequence ID" value="AAH28979.1"/>
    <property type="molecule type" value="mRNA"/>
</dbReference>
<dbReference type="CCDS" id="CCDS22800.1"/>
<dbReference type="RefSeq" id="NP_033938.3">
    <property type="nucleotide sequence ID" value="NM_009808.4"/>
</dbReference>
<dbReference type="SMR" id="O08736"/>
<dbReference type="BioGRID" id="198494">
    <property type="interactions" value="3"/>
</dbReference>
<dbReference type="FunCoup" id="O08736">
    <property type="interactions" value="1234"/>
</dbReference>
<dbReference type="IntAct" id="O08736">
    <property type="interactions" value="1"/>
</dbReference>
<dbReference type="STRING" id="10090.ENSMUSP00000027009"/>
<dbReference type="MEROPS" id="C14.013"/>
<dbReference type="iPTMnet" id="O08736"/>
<dbReference type="PhosphoSitePlus" id="O08736"/>
<dbReference type="PaxDb" id="10090-ENSMUSP00000027009"/>
<dbReference type="ProteomicsDB" id="283678"/>
<dbReference type="Pumba" id="O08736"/>
<dbReference type="Antibodypedia" id="8737">
    <property type="antibodies" value="556 antibodies from 40 providers"/>
</dbReference>
<dbReference type="DNASU" id="12364"/>
<dbReference type="Ensembl" id="ENSMUST00000027009.11">
    <property type="protein sequence ID" value="ENSMUSP00000027009.5"/>
    <property type="gene ID" value="ENSMUSG00000025887.11"/>
</dbReference>
<dbReference type="GeneID" id="12364"/>
<dbReference type="KEGG" id="mmu:12364"/>
<dbReference type="UCSC" id="uc009obw.2">
    <property type="organism name" value="mouse"/>
</dbReference>
<dbReference type="AGR" id="MGI:1312922"/>
<dbReference type="CTD" id="100506742"/>
<dbReference type="MGI" id="MGI:1312922">
    <property type="gene designation" value="Casp12"/>
</dbReference>
<dbReference type="VEuPathDB" id="HostDB:ENSMUSG00000025887"/>
<dbReference type="eggNOG" id="KOG3573">
    <property type="taxonomic scope" value="Eukaryota"/>
</dbReference>
<dbReference type="GeneTree" id="ENSGT00940000162555"/>
<dbReference type="InParanoid" id="O08736"/>
<dbReference type="OMA" id="QSNICND"/>
<dbReference type="OrthoDB" id="6097640at2759"/>
<dbReference type="PhylomeDB" id="O08736"/>
<dbReference type="TreeFam" id="TF102023"/>
<dbReference type="BRENDA" id="3.4.22.B66">
    <property type="organism ID" value="3474"/>
</dbReference>
<dbReference type="BioGRID-ORCS" id="12364">
    <property type="hits" value="4 hits in 76 CRISPR screens"/>
</dbReference>
<dbReference type="PRO" id="PR:O08736"/>
<dbReference type="Proteomes" id="UP000000589">
    <property type="component" value="Chromosome 9"/>
</dbReference>
<dbReference type="RNAct" id="O08736">
    <property type="molecule type" value="protein"/>
</dbReference>
<dbReference type="Bgee" id="ENSMUSG00000025887">
    <property type="expression patterns" value="Expressed in temporalis muscle and 135 other cell types or tissues"/>
</dbReference>
<dbReference type="ExpressionAtlas" id="O08736">
    <property type="expression patterns" value="baseline and differential"/>
</dbReference>
<dbReference type="GO" id="GO:0005783">
    <property type="term" value="C:endoplasmic reticulum"/>
    <property type="evidence" value="ECO:0000314"/>
    <property type="project" value="ParkinsonsUK-UCL"/>
</dbReference>
<dbReference type="GO" id="GO:0004197">
    <property type="term" value="F:cysteine-type endopeptidase activity"/>
    <property type="evidence" value="ECO:0000314"/>
    <property type="project" value="ParkinsonsUK-UCL"/>
</dbReference>
<dbReference type="GO" id="GO:0030968">
    <property type="term" value="P:endoplasmic reticulum unfolded protein response"/>
    <property type="evidence" value="ECO:0000314"/>
    <property type="project" value="MGI"/>
</dbReference>
<dbReference type="GO" id="GO:0044346">
    <property type="term" value="P:fibroblast apoptotic process"/>
    <property type="evidence" value="ECO:0000314"/>
    <property type="project" value="MGI"/>
</dbReference>
<dbReference type="GO" id="GO:0070059">
    <property type="term" value="P:intrinsic apoptotic signaling pathway in response to endoplasmic reticulum stress"/>
    <property type="evidence" value="ECO:0000314"/>
    <property type="project" value="ParkinsonsUK-UCL"/>
</dbReference>
<dbReference type="GO" id="GO:0042981">
    <property type="term" value="P:regulation of apoptotic process"/>
    <property type="evidence" value="ECO:0007669"/>
    <property type="project" value="InterPro"/>
</dbReference>
<dbReference type="GO" id="GO:0097264">
    <property type="term" value="P:self proteolysis"/>
    <property type="evidence" value="ECO:0000314"/>
    <property type="project" value="ParkinsonsUK-UCL"/>
</dbReference>
<dbReference type="CDD" id="cd08325">
    <property type="entry name" value="CARD_CASP1-like"/>
    <property type="match status" value="1"/>
</dbReference>
<dbReference type="CDD" id="cd00032">
    <property type="entry name" value="CASc"/>
    <property type="match status" value="1"/>
</dbReference>
<dbReference type="FunFam" id="3.30.70.1470:FF:000003">
    <property type="entry name" value="Caspase-1"/>
    <property type="match status" value="1"/>
</dbReference>
<dbReference type="FunFam" id="3.40.50.1460:FF:000007">
    <property type="entry name" value="Caspase-1"/>
    <property type="match status" value="1"/>
</dbReference>
<dbReference type="FunFam" id="1.10.533.10:FF:000073">
    <property type="entry name" value="Inactive caspase-12"/>
    <property type="match status" value="1"/>
</dbReference>
<dbReference type="Gene3D" id="3.40.50.1460">
    <property type="match status" value="1"/>
</dbReference>
<dbReference type="Gene3D" id="3.30.70.1470">
    <property type="entry name" value="Caspase-like"/>
    <property type="match status" value="1"/>
</dbReference>
<dbReference type="Gene3D" id="1.10.533.10">
    <property type="entry name" value="Death Domain, Fas"/>
    <property type="match status" value="1"/>
</dbReference>
<dbReference type="InterPro" id="IPR001315">
    <property type="entry name" value="CARD"/>
</dbReference>
<dbReference type="InterPro" id="IPR029030">
    <property type="entry name" value="Caspase-like_dom_sf"/>
</dbReference>
<dbReference type="InterPro" id="IPR033139">
    <property type="entry name" value="Caspase_cys_AS"/>
</dbReference>
<dbReference type="InterPro" id="IPR016129">
    <property type="entry name" value="Caspase_his_AS"/>
</dbReference>
<dbReference type="InterPro" id="IPR011029">
    <property type="entry name" value="DEATH-like_dom_sf"/>
</dbReference>
<dbReference type="InterPro" id="IPR002398">
    <property type="entry name" value="Pept_C14"/>
</dbReference>
<dbReference type="InterPro" id="IPR011600">
    <property type="entry name" value="Pept_C14_caspase"/>
</dbReference>
<dbReference type="InterPro" id="IPR002138">
    <property type="entry name" value="Pept_C14_p10"/>
</dbReference>
<dbReference type="InterPro" id="IPR001309">
    <property type="entry name" value="Pept_C14_p20"/>
</dbReference>
<dbReference type="InterPro" id="IPR015917">
    <property type="entry name" value="Pept_C14A"/>
</dbReference>
<dbReference type="PANTHER" id="PTHR47901">
    <property type="entry name" value="CASPASE RECRUITMENT DOMAIN-CONTAINING PROTEIN 18"/>
    <property type="match status" value="1"/>
</dbReference>
<dbReference type="PANTHER" id="PTHR47901:SF6">
    <property type="entry name" value="CASPASE-12"/>
    <property type="match status" value="1"/>
</dbReference>
<dbReference type="Pfam" id="PF00619">
    <property type="entry name" value="CARD"/>
    <property type="match status" value="1"/>
</dbReference>
<dbReference type="Pfam" id="PF00656">
    <property type="entry name" value="Peptidase_C14"/>
    <property type="match status" value="1"/>
</dbReference>
<dbReference type="PIRSF" id="PIRSF038001">
    <property type="entry name" value="Caspase_ICE"/>
    <property type="match status" value="1"/>
</dbReference>
<dbReference type="PRINTS" id="PR00376">
    <property type="entry name" value="IL1BCENZYME"/>
</dbReference>
<dbReference type="SMART" id="SM00115">
    <property type="entry name" value="CASc"/>
    <property type="match status" value="1"/>
</dbReference>
<dbReference type="SUPFAM" id="SSF52129">
    <property type="entry name" value="Caspase-like"/>
    <property type="match status" value="1"/>
</dbReference>
<dbReference type="SUPFAM" id="SSF47986">
    <property type="entry name" value="DEATH domain"/>
    <property type="match status" value="1"/>
</dbReference>
<dbReference type="PROSITE" id="PS50209">
    <property type="entry name" value="CARD"/>
    <property type="match status" value="1"/>
</dbReference>
<dbReference type="PROSITE" id="PS01122">
    <property type="entry name" value="CASPASE_CYS"/>
    <property type="match status" value="1"/>
</dbReference>
<dbReference type="PROSITE" id="PS01121">
    <property type="entry name" value="CASPASE_HIS"/>
    <property type="match status" value="1"/>
</dbReference>
<dbReference type="PROSITE" id="PS50207">
    <property type="entry name" value="CASPASE_P10"/>
    <property type="match status" value="1"/>
</dbReference>
<dbReference type="PROSITE" id="PS50208">
    <property type="entry name" value="CASPASE_P20"/>
    <property type="match status" value="1"/>
</dbReference>
<proteinExistence type="evidence at protein level"/>
<evidence type="ECO:0000250" key="1"/>
<evidence type="ECO:0000250" key="2">
    <source>
        <dbReference type="UniProtKB" id="Q920D5"/>
    </source>
</evidence>
<evidence type="ECO:0000255" key="3"/>
<evidence type="ECO:0000255" key="4">
    <source>
        <dbReference type="PROSITE-ProRule" id="PRU00046"/>
    </source>
</evidence>
<evidence type="ECO:0000256" key="5">
    <source>
        <dbReference type="SAM" id="MobiDB-lite"/>
    </source>
</evidence>
<evidence type="ECO:0000269" key="6">
    <source>
    </source>
</evidence>
<evidence type="ECO:0000305" key="7"/>
<gene>
    <name type="primary">Casp12</name>
</gene>
<comment type="function">
    <text evidence="1">Involved in the activation cascade of caspases responsible for apoptosis execution.</text>
</comment>
<comment type="subunit">
    <text evidence="6 7">Heterotetramer that consists of two anti-parallel arranged heterodimers, each one formed by two subunits (Potential). Interacts with TRAF2 under resting conditions; this interaction is reduced in ER stress conditions.</text>
</comment>
<comment type="interaction">
    <interactant intactId="EBI-6140033">
        <id>O08736</id>
    </interactant>
    <interactant intactId="EBI-355744">
        <id>Q12933</id>
        <label>TRAF2</label>
    </interactant>
    <organismsDiffer>true</organismsDiffer>
    <experiments>6</experiments>
</comment>
<comment type="tissue specificity">
    <text>Mainly expressed in skeletal muscle and lung.</text>
</comment>
<comment type="similarity">
    <text evidence="7">Belongs to the peptidase C14A family.</text>
</comment>
<organism>
    <name type="scientific">Mus musculus</name>
    <name type="common">Mouse</name>
    <dbReference type="NCBI Taxonomy" id="10090"/>
    <lineage>
        <taxon>Eukaryota</taxon>
        <taxon>Metazoa</taxon>
        <taxon>Chordata</taxon>
        <taxon>Craniata</taxon>
        <taxon>Vertebrata</taxon>
        <taxon>Euteleostomi</taxon>
        <taxon>Mammalia</taxon>
        <taxon>Eutheria</taxon>
        <taxon>Euarchontoglires</taxon>
        <taxon>Glires</taxon>
        <taxon>Rodentia</taxon>
        <taxon>Myomorpha</taxon>
        <taxon>Muroidea</taxon>
        <taxon>Muridae</taxon>
        <taxon>Murinae</taxon>
        <taxon>Mus</taxon>
        <taxon>Mus</taxon>
    </lineage>
</organism>
<protein>
    <recommendedName>
        <fullName>Caspase-12</fullName>
        <shortName>CASP-12</shortName>
        <ecNumber>3.4.22.-</ecNumber>
    </recommendedName>
</protein>
<keyword id="KW-0053">Apoptosis</keyword>
<keyword id="KW-0378">Hydrolase</keyword>
<keyword id="KW-0597">Phosphoprotein</keyword>
<keyword id="KW-0645">Protease</keyword>
<keyword id="KW-1185">Reference proteome</keyword>
<keyword id="KW-0788">Thiol protease</keyword>
<keyword id="KW-0865">Zymogen</keyword>
<reference key="1">
    <citation type="journal article" date="1997" name="FEBS Lett.">
        <title>Characterization of seven murine caspase family members.</title>
        <authorList>
            <person name="van de Craen M."/>
            <person name="Vandenabeele P."/>
            <person name="Declercq W."/>
            <person name="van den Brande I."/>
            <person name="van Loo G."/>
            <person name="Molemans F."/>
            <person name="Schotte P."/>
            <person name="van Criekinge W."/>
            <person name="Beyaert R."/>
            <person name="Fiers W."/>
        </authorList>
    </citation>
    <scope>NUCLEOTIDE SEQUENCE [MRNA]</scope>
    <source>
        <strain>C3H/An</strain>
    </source>
</reference>
<reference key="2">
    <citation type="journal article" date="2005" name="Science">
        <title>The transcriptional landscape of the mammalian genome.</title>
        <authorList>
            <person name="Carninci P."/>
            <person name="Kasukawa T."/>
            <person name="Katayama S."/>
            <person name="Gough J."/>
            <person name="Frith M.C."/>
            <person name="Maeda N."/>
            <person name="Oyama R."/>
            <person name="Ravasi T."/>
            <person name="Lenhard B."/>
            <person name="Wells C."/>
            <person name="Kodzius R."/>
            <person name="Shimokawa K."/>
            <person name="Bajic V.B."/>
            <person name="Brenner S.E."/>
            <person name="Batalov S."/>
            <person name="Forrest A.R."/>
            <person name="Zavolan M."/>
            <person name="Davis M.J."/>
            <person name="Wilming L.G."/>
            <person name="Aidinis V."/>
            <person name="Allen J.E."/>
            <person name="Ambesi-Impiombato A."/>
            <person name="Apweiler R."/>
            <person name="Aturaliya R.N."/>
            <person name="Bailey T.L."/>
            <person name="Bansal M."/>
            <person name="Baxter L."/>
            <person name="Beisel K.W."/>
            <person name="Bersano T."/>
            <person name="Bono H."/>
            <person name="Chalk A.M."/>
            <person name="Chiu K.P."/>
            <person name="Choudhary V."/>
            <person name="Christoffels A."/>
            <person name="Clutterbuck D.R."/>
            <person name="Crowe M.L."/>
            <person name="Dalla E."/>
            <person name="Dalrymple B.P."/>
            <person name="de Bono B."/>
            <person name="Della Gatta G."/>
            <person name="di Bernardo D."/>
            <person name="Down T."/>
            <person name="Engstrom P."/>
            <person name="Fagiolini M."/>
            <person name="Faulkner G."/>
            <person name="Fletcher C.F."/>
            <person name="Fukushima T."/>
            <person name="Furuno M."/>
            <person name="Futaki S."/>
            <person name="Gariboldi M."/>
            <person name="Georgii-Hemming P."/>
            <person name="Gingeras T.R."/>
            <person name="Gojobori T."/>
            <person name="Green R.E."/>
            <person name="Gustincich S."/>
            <person name="Harbers M."/>
            <person name="Hayashi Y."/>
            <person name="Hensch T.K."/>
            <person name="Hirokawa N."/>
            <person name="Hill D."/>
            <person name="Huminiecki L."/>
            <person name="Iacono M."/>
            <person name="Ikeo K."/>
            <person name="Iwama A."/>
            <person name="Ishikawa T."/>
            <person name="Jakt M."/>
            <person name="Kanapin A."/>
            <person name="Katoh M."/>
            <person name="Kawasawa Y."/>
            <person name="Kelso J."/>
            <person name="Kitamura H."/>
            <person name="Kitano H."/>
            <person name="Kollias G."/>
            <person name="Krishnan S.P."/>
            <person name="Kruger A."/>
            <person name="Kummerfeld S.K."/>
            <person name="Kurochkin I.V."/>
            <person name="Lareau L.F."/>
            <person name="Lazarevic D."/>
            <person name="Lipovich L."/>
            <person name="Liu J."/>
            <person name="Liuni S."/>
            <person name="McWilliam S."/>
            <person name="Madan Babu M."/>
            <person name="Madera M."/>
            <person name="Marchionni L."/>
            <person name="Matsuda H."/>
            <person name="Matsuzawa S."/>
            <person name="Miki H."/>
            <person name="Mignone F."/>
            <person name="Miyake S."/>
            <person name="Morris K."/>
            <person name="Mottagui-Tabar S."/>
            <person name="Mulder N."/>
            <person name="Nakano N."/>
            <person name="Nakauchi H."/>
            <person name="Ng P."/>
            <person name="Nilsson R."/>
            <person name="Nishiguchi S."/>
            <person name="Nishikawa S."/>
            <person name="Nori F."/>
            <person name="Ohara O."/>
            <person name="Okazaki Y."/>
            <person name="Orlando V."/>
            <person name="Pang K.C."/>
            <person name="Pavan W.J."/>
            <person name="Pavesi G."/>
            <person name="Pesole G."/>
            <person name="Petrovsky N."/>
            <person name="Piazza S."/>
            <person name="Reed J."/>
            <person name="Reid J.F."/>
            <person name="Ring B.Z."/>
            <person name="Ringwald M."/>
            <person name="Rost B."/>
            <person name="Ruan Y."/>
            <person name="Salzberg S.L."/>
            <person name="Sandelin A."/>
            <person name="Schneider C."/>
            <person name="Schoenbach C."/>
            <person name="Sekiguchi K."/>
            <person name="Semple C.A."/>
            <person name="Seno S."/>
            <person name="Sessa L."/>
            <person name="Sheng Y."/>
            <person name="Shibata Y."/>
            <person name="Shimada H."/>
            <person name="Shimada K."/>
            <person name="Silva D."/>
            <person name="Sinclair B."/>
            <person name="Sperling S."/>
            <person name="Stupka E."/>
            <person name="Sugiura K."/>
            <person name="Sultana R."/>
            <person name="Takenaka Y."/>
            <person name="Taki K."/>
            <person name="Tammoja K."/>
            <person name="Tan S.L."/>
            <person name="Tang S."/>
            <person name="Taylor M.S."/>
            <person name="Tegner J."/>
            <person name="Teichmann S.A."/>
            <person name="Ueda H.R."/>
            <person name="van Nimwegen E."/>
            <person name="Verardo R."/>
            <person name="Wei C.L."/>
            <person name="Yagi K."/>
            <person name="Yamanishi H."/>
            <person name="Zabarovsky E."/>
            <person name="Zhu S."/>
            <person name="Zimmer A."/>
            <person name="Hide W."/>
            <person name="Bult C."/>
            <person name="Grimmond S.M."/>
            <person name="Teasdale R.D."/>
            <person name="Liu E.T."/>
            <person name="Brusic V."/>
            <person name="Quackenbush J."/>
            <person name="Wahlestedt C."/>
            <person name="Mattick J.S."/>
            <person name="Hume D.A."/>
            <person name="Kai C."/>
            <person name="Sasaki D."/>
            <person name="Tomaru Y."/>
            <person name="Fukuda S."/>
            <person name="Kanamori-Katayama M."/>
            <person name="Suzuki M."/>
            <person name="Aoki J."/>
            <person name="Arakawa T."/>
            <person name="Iida J."/>
            <person name="Imamura K."/>
            <person name="Itoh M."/>
            <person name="Kato T."/>
            <person name="Kawaji H."/>
            <person name="Kawagashira N."/>
            <person name="Kawashima T."/>
            <person name="Kojima M."/>
            <person name="Kondo S."/>
            <person name="Konno H."/>
            <person name="Nakano K."/>
            <person name="Ninomiya N."/>
            <person name="Nishio T."/>
            <person name="Okada M."/>
            <person name="Plessy C."/>
            <person name="Shibata K."/>
            <person name="Shiraki T."/>
            <person name="Suzuki S."/>
            <person name="Tagami M."/>
            <person name="Waki K."/>
            <person name="Watahiki A."/>
            <person name="Okamura-Oho Y."/>
            <person name="Suzuki H."/>
            <person name="Kawai J."/>
            <person name="Hayashizaki Y."/>
        </authorList>
    </citation>
    <scope>NUCLEOTIDE SEQUENCE [LARGE SCALE MRNA]</scope>
    <source>
        <strain>C57BL/6J</strain>
        <tissue>Ovary</tissue>
        <tissue>Uterus</tissue>
    </source>
</reference>
<reference key="3">
    <citation type="journal article" date="2004" name="Genome Res.">
        <title>The status, quality, and expansion of the NIH full-length cDNA project: the Mammalian Gene Collection (MGC).</title>
        <authorList>
            <consortium name="The MGC Project Team"/>
        </authorList>
    </citation>
    <scope>NUCLEOTIDE SEQUENCE [LARGE SCALE MRNA]</scope>
    <source>
        <strain>FVB/N-3</strain>
        <tissue>Mammary gland</tissue>
    </source>
</reference>
<reference key="4">
    <citation type="journal article" date="2001" name="J. Biol. Chem.">
        <title>Activation of caspase-12, an endoplastic reticulum (ER) resident caspase, through tumor necrosis factor receptor-associated factor 2-dependent mechanism in response to the ER stress.</title>
        <authorList>
            <person name="Yoneda T."/>
            <person name="Imaizumi K."/>
            <person name="Oono K."/>
            <person name="Yui D."/>
            <person name="Gomi F."/>
            <person name="Katayama T."/>
            <person name="Tohyama M."/>
        </authorList>
    </citation>
    <scope>INTERACTION WITH TRAF2</scope>
</reference>
<name>CASPC_MOUSE</name>
<feature type="propeptide" id="PRO_0000004647" evidence="3">
    <location>
        <begin position="1"/>
        <end status="unknown"/>
    </location>
</feature>
<feature type="chain" id="PRO_0000004648" description="Caspase-12">
    <location>
        <begin status="unknown"/>
        <end position="419"/>
    </location>
</feature>
<feature type="domain" description="CARD" evidence="4">
    <location>
        <begin position="1"/>
        <end position="92"/>
    </location>
</feature>
<feature type="region of interest" description="Disordered" evidence="5">
    <location>
        <begin position="88"/>
        <end position="113"/>
    </location>
</feature>
<feature type="active site" evidence="1">
    <location>
        <position position="250"/>
    </location>
</feature>
<feature type="active site" evidence="1">
    <location>
        <position position="298"/>
    </location>
</feature>
<feature type="modified residue" description="Phosphoserine" evidence="2">
    <location>
        <position position="85"/>
    </location>
</feature>
<accession>O08736</accession>
<accession>Q3TT82</accession>
<sequence length="419" mass="47854">MAARRTHERDPIYKIKGLAKDMLDGVFDDLVEKNVLNGDELLKIGESASFILNKAENLVENFLEKTDMAGKIFAGHIANSQEQLSLQFSNDEDDGPQKICTPSSPSESKRKVEDDEMEVNAGLAHESHLMLTAPHGLQSSEVQDTLKLCPRDQFCKIKTERAKEIYPVMEKEGRTRLALIICNKKFDYLFDRDNADTDILNMQELLENLGYSVVLKENLTAQEMETELMQFAGRPEHQSSDSTFLVFMSHGILEGICGVKHRNKKPDVLHDDTIFKIFNNSNCRSLRNKPKILIMQACRGRYNGTIWVSTNKGIATADTDEERVLSCKWNNSITKAHVETDFIAFKSSTPHNISWKVGKTGSLFISKLIDCFKKYCWCYHLEEIFRKVQHSFEVPGELTQMPTIERVSMTRYFYLFPGN</sequence>